<evidence type="ECO:0000250" key="1"/>
<evidence type="ECO:0000250" key="2">
    <source>
        <dbReference type="UniProtKB" id="Q9Y5J9"/>
    </source>
</evidence>
<evidence type="ECO:0000305" key="3"/>
<accession>Q3SZ93</accession>
<gene>
    <name type="primary">TIMM8B</name>
</gene>
<keyword id="KW-0007">Acetylation</keyword>
<keyword id="KW-0143">Chaperone</keyword>
<keyword id="KW-1015">Disulfide bond</keyword>
<keyword id="KW-0472">Membrane</keyword>
<keyword id="KW-0479">Metal-binding</keyword>
<keyword id="KW-0496">Mitochondrion</keyword>
<keyword id="KW-0999">Mitochondrion inner membrane</keyword>
<keyword id="KW-0653">Protein transport</keyword>
<keyword id="KW-1185">Reference proteome</keyword>
<keyword id="KW-0811">Translocation</keyword>
<keyword id="KW-0813">Transport</keyword>
<keyword id="KW-0862">Zinc</keyword>
<dbReference type="EMBL" id="BC103032">
    <property type="protein sequence ID" value="AAI03033.1"/>
    <property type="molecule type" value="mRNA"/>
</dbReference>
<dbReference type="RefSeq" id="NP_001032718.1">
    <property type="nucleotide sequence ID" value="NM_001037629.1"/>
</dbReference>
<dbReference type="SMR" id="Q3SZ93"/>
<dbReference type="FunCoup" id="Q3SZ93">
    <property type="interactions" value="1943"/>
</dbReference>
<dbReference type="STRING" id="9913.ENSBTAP00000002594"/>
<dbReference type="PaxDb" id="9913-ENSBTAP00000002594"/>
<dbReference type="GeneID" id="618131"/>
<dbReference type="KEGG" id="bta:618131"/>
<dbReference type="CTD" id="26521"/>
<dbReference type="VEuPathDB" id="HostDB:ENSBTAG00000002000"/>
<dbReference type="eggNOG" id="KOG3489">
    <property type="taxonomic scope" value="Eukaryota"/>
</dbReference>
<dbReference type="HOGENOM" id="CLU_141397_1_2_1"/>
<dbReference type="InParanoid" id="Q3SZ93"/>
<dbReference type="OMA" id="NEICWDK"/>
<dbReference type="OrthoDB" id="344165at2759"/>
<dbReference type="TreeFam" id="TF106191"/>
<dbReference type="Proteomes" id="UP000009136">
    <property type="component" value="Chromosome 15"/>
</dbReference>
<dbReference type="Bgee" id="ENSBTAG00000002000">
    <property type="expression patterns" value="Expressed in semen and 106 other cell types or tissues"/>
</dbReference>
<dbReference type="GO" id="GO:0005743">
    <property type="term" value="C:mitochondrial inner membrane"/>
    <property type="evidence" value="ECO:0007669"/>
    <property type="project" value="UniProtKB-SubCell"/>
</dbReference>
<dbReference type="GO" id="GO:0046872">
    <property type="term" value="F:metal ion binding"/>
    <property type="evidence" value="ECO:0007669"/>
    <property type="project" value="UniProtKB-KW"/>
</dbReference>
<dbReference type="GO" id="GO:0015031">
    <property type="term" value="P:protein transport"/>
    <property type="evidence" value="ECO:0007669"/>
    <property type="project" value="UniProtKB-KW"/>
</dbReference>
<dbReference type="FunFam" id="1.10.287.810:FF:000005">
    <property type="entry name" value="Mitochondrial import inner membrane translocase subunit Tim8 B"/>
    <property type="match status" value="1"/>
</dbReference>
<dbReference type="Gene3D" id="1.10.287.810">
    <property type="entry name" value="Mitochondrial import inner membrane translocase subunit tim13 like domains"/>
    <property type="match status" value="1"/>
</dbReference>
<dbReference type="InterPro" id="IPR004217">
    <property type="entry name" value="Tim10-like"/>
</dbReference>
<dbReference type="InterPro" id="IPR035427">
    <property type="entry name" value="Tim10-like_dom_sf"/>
</dbReference>
<dbReference type="Pfam" id="PF02953">
    <property type="entry name" value="zf-Tim10_DDP"/>
    <property type="match status" value="1"/>
</dbReference>
<dbReference type="SUPFAM" id="SSF144122">
    <property type="entry name" value="Tim10-like"/>
    <property type="match status" value="1"/>
</dbReference>
<sequence>MAELGEADEAELQRLVAAEQQKAQFTAQVHHFMELCWDKCVEKPGNRLDSRTENCLSSCVDRFIDTTLAITSRFAQIVQRGGQ</sequence>
<comment type="function">
    <text evidence="1">Probable mitochondrial intermembrane chaperone that participates in the import and insertion of some multi-pass transmembrane proteins into the mitochondrial inner membrane. Also required for the transfer of beta-barrel precursors from the TOM complex to the sorting and assembly machinery (SAM complex) of the outer membrane. Acts as a chaperone-like protein that protects the hydrophobic precursors from aggregation and guide them through the mitochondrial intermembrane space (By similarity).</text>
</comment>
<comment type="subunit">
    <text evidence="1">Heterohexamer; possibly composed of 3 copies of TIMM8B and 3 copies of TIMM13, named soluble 70 kDa complex. Associates with the TIM22 complex, whose core is composed of TIMM22 (By similarity).</text>
</comment>
<comment type="subcellular location">
    <subcellularLocation>
        <location evidence="1">Mitochondrion inner membrane</location>
        <topology evidence="1">Peripheral membrane protein</topology>
        <orientation evidence="1">Intermembrane side</orientation>
    </subcellularLocation>
</comment>
<comment type="domain">
    <text evidence="1">The twin CX3C motif contains 4 conserved Cys residues that form 2 disulfide bonds in the mitochondrial intermembrane space. However, during the transit of TIMM8B from cytoplasm into mitochondrion, the Cys residues probably coordinate zinc, thereby preventing folding and allowing its transfer across mitochondrial outer membrane (By similarity).</text>
</comment>
<comment type="similarity">
    <text evidence="3">Belongs to the small Tim family.</text>
</comment>
<reference key="1">
    <citation type="submission" date="2005-08" db="EMBL/GenBank/DDBJ databases">
        <authorList>
            <consortium name="NIH - Mammalian Gene Collection (MGC) project"/>
        </authorList>
    </citation>
    <scope>NUCLEOTIDE SEQUENCE [LARGE SCALE MRNA]</scope>
    <source>
        <strain>Crossbred X Angus</strain>
        <tissue>Ileum</tissue>
    </source>
</reference>
<feature type="initiator methionine" description="Removed" evidence="2">
    <location>
        <position position="1"/>
    </location>
</feature>
<feature type="chain" id="PRO_0000228025" description="Mitochondrial import inner membrane translocase subunit Tim8 B">
    <location>
        <begin position="2"/>
        <end position="83"/>
    </location>
</feature>
<feature type="short sequence motif" description="Twin CX3C motif">
    <location>
        <begin position="36"/>
        <end position="59"/>
    </location>
</feature>
<feature type="modified residue" description="N-acetylalanine" evidence="2">
    <location>
        <position position="2"/>
    </location>
</feature>
<feature type="disulfide bond" evidence="1">
    <location>
        <begin position="36"/>
        <end position="59"/>
    </location>
</feature>
<feature type="disulfide bond" evidence="1">
    <location>
        <begin position="40"/>
        <end position="55"/>
    </location>
</feature>
<name>TIM8B_BOVIN</name>
<protein>
    <recommendedName>
        <fullName>Mitochondrial import inner membrane translocase subunit Tim8 B</fullName>
    </recommendedName>
</protein>
<proteinExistence type="inferred from homology"/>
<organism>
    <name type="scientific">Bos taurus</name>
    <name type="common">Bovine</name>
    <dbReference type="NCBI Taxonomy" id="9913"/>
    <lineage>
        <taxon>Eukaryota</taxon>
        <taxon>Metazoa</taxon>
        <taxon>Chordata</taxon>
        <taxon>Craniata</taxon>
        <taxon>Vertebrata</taxon>
        <taxon>Euteleostomi</taxon>
        <taxon>Mammalia</taxon>
        <taxon>Eutheria</taxon>
        <taxon>Laurasiatheria</taxon>
        <taxon>Artiodactyla</taxon>
        <taxon>Ruminantia</taxon>
        <taxon>Pecora</taxon>
        <taxon>Bovidae</taxon>
        <taxon>Bovinae</taxon>
        <taxon>Bos</taxon>
    </lineage>
</organism>